<dbReference type="EC" id="3.1.-.-" evidence="1"/>
<dbReference type="EMBL" id="CP000728">
    <property type="protein sequence ID" value="ABS42321.1"/>
    <property type="molecule type" value="Genomic_DNA"/>
</dbReference>
<dbReference type="SMR" id="A7GGE9"/>
<dbReference type="KEGG" id="cbf:CLI_2625"/>
<dbReference type="HOGENOM" id="CLU_098240_2_0_9"/>
<dbReference type="Proteomes" id="UP000002410">
    <property type="component" value="Chromosome"/>
</dbReference>
<dbReference type="GO" id="GO:0005829">
    <property type="term" value="C:cytosol"/>
    <property type="evidence" value="ECO:0007669"/>
    <property type="project" value="TreeGrafter"/>
</dbReference>
<dbReference type="GO" id="GO:0004518">
    <property type="term" value="F:nuclease activity"/>
    <property type="evidence" value="ECO:0007669"/>
    <property type="project" value="UniProtKB-KW"/>
</dbReference>
<dbReference type="GO" id="GO:0000967">
    <property type="term" value="P:rRNA 5'-end processing"/>
    <property type="evidence" value="ECO:0007669"/>
    <property type="project" value="UniProtKB-UniRule"/>
</dbReference>
<dbReference type="CDD" id="cd16964">
    <property type="entry name" value="YqgF"/>
    <property type="match status" value="1"/>
</dbReference>
<dbReference type="FunFam" id="3.30.420.140:FF:000003">
    <property type="entry name" value="Putative pre-16S rRNA nuclease"/>
    <property type="match status" value="1"/>
</dbReference>
<dbReference type="Gene3D" id="3.30.420.140">
    <property type="entry name" value="YqgF/RNase H-like domain"/>
    <property type="match status" value="1"/>
</dbReference>
<dbReference type="HAMAP" id="MF_00651">
    <property type="entry name" value="Nuclease_YqgF"/>
    <property type="match status" value="1"/>
</dbReference>
<dbReference type="InterPro" id="IPR012337">
    <property type="entry name" value="RNaseH-like_sf"/>
</dbReference>
<dbReference type="InterPro" id="IPR005227">
    <property type="entry name" value="YqgF"/>
</dbReference>
<dbReference type="InterPro" id="IPR006641">
    <property type="entry name" value="YqgF/RNaseH-like_dom"/>
</dbReference>
<dbReference type="InterPro" id="IPR037027">
    <property type="entry name" value="YqgF/RNaseH-like_dom_sf"/>
</dbReference>
<dbReference type="NCBIfam" id="TIGR00250">
    <property type="entry name" value="RNAse_H_YqgF"/>
    <property type="match status" value="1"/>
</dbReference>
<dbReference type="PANTHER" id="PTHR33317">
    <property type="entry name" value="POLYNUCLEOTIDYL TRANSFERASE, RIBONUCLEASE H-LIKE SUPERFAMILY PROTEIN"/>
    <property type="match status" value="1"/>
</dbReference>
<dbReference type="PANTHER" id="PTHR33317:SF4">
    <property type="entry name" value="POLYNUCLEOTIDYL TRANSFERASE, RIBONUCLEASE H-LIKE SUPERFAMILY PROTEIN"/>
    <property type="match status" value="1"/>
</dbReference>
<dbReference type="Pfam" id="PF03652">
    <property type="entry name" value="RuvX"/>
    <property type="match status" value="1"/>
</dbReference>
<dbReference type="SMART" id="SM00732">
    <property type="entry name" value="YqgFc"/>
    <property type="match status" value="1"/>
</dbReference>
<dbReference type="SUPFAM" id="SSF53098">
    <property type="entry name" value="Ribonuclease H-like"/>
    <property type="match status" value="1"/>
</dbReference>
<accession>A7GGE9</accession>
<proteinExistence type="inferred from homology"/>
<reference key="1">
    <citation type="submission" date="2007-06" db="EMBL/GenBank/DDBJ databases">
        <authorList>
            <person name="Brinkac L.M."/>
            <person name="Daugherty S."/>
            <person name="Dodson R.J."/>
            <person name="Madupu R."/>
            <person name="Brown J.L."/>
            <person name="Bruce D."/>
            <person name="Detter C."/>
            <person name="Munk C."/>
            <person name="Smith L.A."/>
            <person name="Smith T.J."/>
            <person name="White O."/>
            <person name="Brettin T.S."/>
        </authorList>
    </citation>
    <scope>NUCLEOTIDE SEQUENCE [LARGE SCALE GENOMIC DNA]</scope>
    <source>
        <strain>Langeland / NCTC 10281 / Type F</strain>
    </source>
</reference>
<name>YQGF_CLOBL</name>
<keyword id="KW-0963">Cytoplasm</keyword>
<keyword id="KW-0378">Hydrolase</keyword>
<keyword id="KW-0540">Nuclease</keyword>
<keyword id="KW-0690">Ribosome biogenesis</keyword>
<gene>
    <name type="ordered locus">CLI_2625</name>
</gene>
<protein>
    <recommendedName>
        <fullName evidence="1">Putative pre-16S rRNA nuclease</fullName>
        <ecNumber evidence="1">3.1.-.-</ecNumber>
    </recommendedName>
</protein>
<feature type="chain" id="PRO_1000061506" description="Putative pre-16S rRNA nuclease">
    <location>
        <begin position="1"/>
        <end position="137"/>
    </location>
</feature>
<sequence>MRILGLDIGDRTIGIAISDPLGFTAQGITTIRRKSEAYDLEEIKKICDKYEVDTIVSGLPKNMNGTLGPQSEKVLEFCDLIKEHLNIEIKMWDERLTTVAATRAMLEADLSRSKRKKIVDKVAATYILQGYLDSLSK</sequence>
<comment type="function">
    <text evidence="1">Could be a nuclease involved in processing of the 5'-end of pre-16S rRNA.</text>
</comment>
<comment type="subcellular location">
    <subcellularLocation>
        <location evidence="1">Cytoplasm</location>
    </subcellularLocation>
</comment>
<comment type="similarity">
    <text evidence="1">Belongs to the YqgF nuclease family.</text>
</comment>
<evidence type="ECO:0000255" key="1">
    <source>
        <dbReference type="HAMAP-Rule" id="MF_00651"/>
    </source>
</evidence>
<organism>
    <name type="scientific">Clostridium botulinum (strain Langeland / NCTC 10281 / Type F)</name>
    <dbReference type="NCBI Taxonomy" id="441772"/>
    <lineage>
        <taxon>Bacteria</taxon>
        <taxon>Bacillati</taxon>
        <taxon>Bacillota</taxon>
        <taxon>Clostridia</taxon>
        <taxon>Eubacteriales</taxon>
        <taxon>Clostridiaceae</taxon>
        <taxon>Clostridium</taxon>
    </lineage>
</organism>